<gene>
    <name evidence="1" type="primary">rhaD</name>
    <name type="ordered locus">lin2979</name>
</gene>
<accession>Q926R2</accession>
<protein>
    <recommendedName>
        <fullName evidence="1">Rhamnulose-1-phosphate aldolase</fullName>
        <ecNumber evidence="1">4.1.2.19</ecNumber>
    </recommendedName>
</protein>
<keyword id="KW-0963">Cytoplasm</keyword>
<keyword id="KW-0456">Lyase</keyword>
<keyword id="KW-0479">Metal-binding</keyword>
<keyword id="KW-0684">Rhamnose metabolism</keyword>
<keyword id="KW-0862">Zinc</keyword>
<sequence>MTKDILDADFIKEMAKTTSNLYRLGWDERNGGNITYLLDEKEVVEYLDVKQIIRTIPMDFDGEKLAGKYFLVTGSGKYFKNVEEAPAVNLGVIQVSEDGKAVHLLWGYTDGGLPTSELPAHFMSHIARLSVDPENRVVMHCHATHLLAMTFTHELTERAFTRTLWQMCTECLVVFPEGVGIIPWLVPGTNDIGKATSEKMKENRLIVWPHHGIYGAGQSMDETFGLIETAEKAAEVYTIVMSQGGIKQAITDEQLKALGERFGVEAKAGYLNN</sequence>
<dbReference type="EC" id="4.1.2.19" evidence="1"/>
<dbReference type="EMBL" id="AL596174">
    <property type="protein sequence ID" value="CAC98204.1"/>
    <property type="molecule type" value="Genomic_DNA"/>
</dbReference>
<dbReference type="PIR" id="AD1804">
    <property type="entry name" value="AD1804"/>
</dbReference>
<dbReference type="RefSeq" id="WP_003772730.1">
    <property type="nucleotide sequence ID" value="NC_003212.1"/>
</dbReference>
<dbReference type="SMR" id="Q926R2"/>
<dbReference type="STRING" id="272626.gene:17567366"/>
<dbReference type="GeneID" id="93236256"/>
<dbReference type="KEGG" id="lin:lin2979"/>
<dbReference type="eggNOG" id="COG0235">
    <property type="taxonomic scope" value="Bacteria"/>
</dbReference>
<dbReference type="HOGENOM" id="CLU_076831_0_0_9"/>
<dbReference type="OrthoDB" id="9784634at2"/>
<dbReference type="UniPathway" id="UPA00541">
    <property type="reaction ID" value="UER00603"/>
</dbReference>
<dbReference type="Proteomes" id="UP000002513">
    <property type="component" value="Chromosome"/>
</dbReference>
<dbReference type="GO" id="GO:0005829">
    <property type="term" value="C:cytosol"/>
    <property type="evidence" value="ECO:0007669"/>
    <property type="project" value="TreeGrafter"/>
</dbReference>
<dbReference type="GO" id="GO:0046872">
    <property type="term" value="F:metal ion binding"/>
    <property type="evidence" value="ECO:0007669"/>
    <property type="project" value="UniProtKB-KW"/>
</dbReference>
<dbReference type="GO" id="GO:0008994">
    <property type="term" value="F:rhamnulose-1-phosphate aldolase activity"/>
    <property type="evidence" value="ECO:0007669"/>
    <property type="project" value="UniProtKB-UniRule"/>
</dbReference>
<dbReference type="GO" id="GO:0019323">
    <property type="term" value="P:pentose catabolic process"/>
    <property type="evidence" value="ECO:0007669"/>
    <property type="project" value="TreeGrafter"/>
</dbReference>
<dbReference type="GO" id="GO:0019301">
    <property type="term" value="P:rhamnose catabolic process"/>
    <property type="evidence" value="ECO:0007669"/>
    <property type="project" value="UniProtKB-UniRule"/>
</dbReference>
<dbReference type="Gene3D" id="3.40.225.10">
    <property type="entry name" value="Class II aldolase/adducin N-terminal domain"/>
    <property type="match status" value="1"/>
</dbReference>
<dbReference type="HAMAP" id="MF_00770">
    <property type="entry name" value="RhaD"/>
    <property type="match status" value="1"/>
</dbReference>
<dbReference type="InterPro" id="IPR050197">
    <property type="entry name" value="Aldolase_class_II_sugar_metab"/>
</dbReference>
<dbReference type="InterPro" id="IPR001303">
    <property type="entry name" value="Aldolase_II/adducin_N"/>
</dbReference>
<dbReference type="InterPro" id="IPR036409">
    <property type="entry name" value="Aldolase_II/adducin_N_sf"/>
</dbReference>
<dbReference type="InterPro" id="IPR013447">
    <property type="entry name" value="Rhamnulose-1-P_Aldolase"/>
</dbReference>
<dbReference type="NCBIfam" id="NF002963">
    <property type="entry name" value="PRK03634.1"/>
    <property type="match status" value="1"/>
</dbReference>
<dbReference type="NCBIfam" id="TIGR02624">
    <property type="entry name" value="rhamnu_1P_ald"/>
    <property type="match status" value="1"/>
</dbReference>
<dbReference type="PANTHER" id="PTHR22789:SF0">
    <property type="entry name" value="3-OXO-TETRONATE 4-PHOSPHATE DECARBOXYLASE-RELATED"/>
    <property type="match status" value="1"/>
</dbReference>
<dbReference type="PANTHER" id="PTHR22789">
    <property type="entry name" value="FUCULOSE PHOSPHATE ALDOLASE"/>
    <property type="match status" value="1"/>
</dbReference>
<dbReference type="Pfam" id="PF00596">
    <property type="entry name" value="Aldolase_II"/>
    <property type="match status" value="1"/>
</dbReference>
<dbReference type="SMART" id="SM01007">
    <property type="entry name" value="Aldolase_II"/>
    <property type="match status" value="1"/>
</dbReference>
<dbReference type="SUPFAM" id="SSF53639">
    <property type="entry name" value="AraD/HMP-PK domain-like"/>
    <property type="match status" value="1"/>
</dbReference>
<feature type="chain" id="PRO_0000209663" description="Rhamnulose-1-phosphate aldolase">
    <location>
        <begin position="1"/>
        <end position="273"/>
    </location>
</feature>
<feature type="active site" evidence="1">
    <location>
        <position position="117"/>
    </location>
</feature>
<feature type="binding site" evidence="1">
    <location>
        <position position="140"/>
    </location>
    <ligand>
        <name>Zn(2+)</name>
        <dbReference type="ChEBI" id="CHEBI:29105"/>
    </ligand>
</feature>
<feature type="binding site" evidence="1">
    <location>
        <position position="142"/>
    </location>
    <ligand>
        <name>Zn(2+)</name>
        <dbReference type="ChEBI" id="CHEBI:29105"/>
    </ligand>
</feature>
<feature type="binding site" evidence="1">
    <location>
        <position position="211"/>
    </location>
    <ligand>
        <name>Zn(2+)</name>
        <dbReference type="ChEBI" id="CHEBI:29105"/>
    </ligand>
</feature>
<name>RHAD_LISIN</name>
<comment type="function">
    <text evidence="1">Catalyzes the reversible cleavage of L-rhamnulose-1-phosphate to dihydroxyacetone phosphate (DHAP) and L-lactaldehyde.</text>
</comment>
<comment type="catalytic activity">
    <reaction evidence="1">
        <text>L-rhamnulose 1-phosphate = (S)-lactaldehyde + dihydroxyacetone phosphate</text>
        <dbReference type="Rhea" id="RHEA:19689"/>
        <dbReference type="ChEBI" id="CHEBI:18041"/>
        <dbReference type="ChEBI" id="CHEBI:57642"/>
        <dbReference type="ChEBI" id="CHEBI:58313"/>
        <dbReference type="EC" id="4.1.2.19"/>
    </reaction>
</comment>
<comment type="cofactor">
    <cofactor evidence="1">
        <name>Zn(2+)</name>
        <dbReference type="ChEBI" id="CHEBI:29105"/>
    </cofactor>
    <text evidence="1">Binds 1 zinc ion per subunit.</text>
</comment>
<comment type="pathway">
    <text evidence="1">Carbohydrate degradation; L-rhamnose degradation; glycerone phosphate from L-rhamnose: step 3/3.</text>
</comment>
<comment type="subcellular location">
    <subcellularLocation>
        <location evidence="1">Cytoplasm</location>
    </subcellularLocation>
</comment>
<comment type="similarity">
    <text evidence="1">Belongs to the aldolase class II family. RhaD subfamily.</text>
</comment>
<organism>
    <name type="scientific">Listeria innocua serovar 6a (strain ATCC BAA-680 / CLIP 11262)</name>
    <dbReference type="NCBI Taxonomy" id="272626"/>
    <lineage>
        <taxon>Bacteria</taxon>
        <taxon>Bacillati</taxon>
        <taxon>Bacillota</taxon>
        <taxon>Bacilli</taxon>
        <taxon>Bacillales</taxon>
        <taxon>Listeriaceae</taxon>
        <taxon>Listeria</taxon>
    </lineage>
</organism>
<evidence type="ECO:0000255" key="1">
    <source>
        <dbReference type="HAMAP-Rule" id="MF_00770"/>
    </source>
</evidence>
<proteinExistence type="inferred from homology"/>
<reference key="1">
    <citation type="journal article" date="2001" name="Science">
        <title>Comparative genomics of Listeria species.</title>
        <authorList>
            <person name="Glaser P."/>
            <person name="Frangeul L."/>
            <person name="Buchrieser C."/>
            <person name="Rusniok C."/>
            <person name="Amend A."/>
            <person name="Baquero F."/>
            <person name="Berche P."/>
            <person name="Bloecker H."/>
            <person name="Brandt P."/>
            <person name="Chakraborty T."/>
            <person name="Charbit A."/>
            <person name="Chetouani F."/>
            <person name="Couve E."/>
            <person name="de Daruvar A."/>
            <person name="Dehoux P."/>
            <person name="Domann E."/>
            <person name="Dominguez-Bernal G."/>
            <person name="Duchaud E."/>
            <person name="Durant L."/>
            <person name="Dussurget O."/>
            <person name="Entian K.-D."/>
            <person name="Fsihi H."/>
            <person name="Garcia-del Portillo F."/>
            <person name="Garrido P."/>
            <person name="Gautier L."/>
            <person name="Goebel W."/>
            <person name="Gomez-Lopez N."/>
            <person name="Hain T."/>
            <person name="Hauf J."/>
            <person name="Jackson D."/>
            <person name="Jones L.-M."/>
            <person name="Kaerst U."/>
            <person name="Kreft J."/>
            <person name="Kuhn M."/>
            <person name="Kunst F."/>
            <person name="Kurapkat G."/>
            <person name="Madueno E."/>
            <person name="Maitournam A."/>
            <person name="Mata Vicente J."/>
            <person name="Ng E."/>
            <person name="Nedjari H."/>
            <person name="Nordsiek G."/>
            <person name="Novella S."/>
            <person name="de Pablos B."/>
            <person name="Perez-Diaz J.-C."/>
            <person name="Purcell R."/>
            <person name="Remmel B."/>
            <person name="Rose M."/>
            <person name="Schlueter T."/>
            <person name="Simoes N."/>
            <person name="Tierrez A."/>
            <person name="Vazquez-Boland J.-A."/>
            <person name="Voss H."/>
            <person name="Wehland J."/>
            <person name="Cossart P."/>
        </authorList>
    </citation>
    <scope>NUCLEOTIDE SEQUENCE [LARGE SCALE GENOMIC DNA]</scope>
    <source>
        <strain>ATCC BAA-680 / CLIP 11262</strain>
    </source>
</reference>